<sequence>MSDNKVEVDKRRTFAIISHPDAGKTTITEKVLLFGNALQKAGTVKGKKSGQHAKSDWMEMEKDRGISITTSVMQFPYGGALVNLLDTPGHEDFSEDTYRTLTAVDSCLMVIDSAKGVEDRTIKLMEVTRLRDTPIVTFMNKLDRDIRDPIELMDEVEDVLNIACAPITWPIGSGKEFKGVYHILRDEVVLYQSGMGHTIQERRVIEGIDNPELDKAIGSYAADLRDEMELVRGASNEFDHQAFLKGELTPVFFGTALGNFGVDHILDGIVEWAPKPLPRESDARMIMPDEEKFTGFVFKIQANMDPKHRDRVAFMRVCSGRYEQGMKMHHVRIGKDVNVSDALTFMAGDRERAEVAYPGDIIGLHNHGTIRIGDTFTQGEKFRFTGVPNFAPEMFRRIRLRDPLKQKQLLKGLVQLSEEGAVQVFRPLDSNDLIVGAVGVLQFEVVVGRLKSEYNVEAIYEGISVSTARWVYCKDERKLEEFRRKCSQNLALDGGDNLTYIAPTMVNLNLSMERYPDIEFAKTREH</sequence>
<comment type="function">
    <text evidence="1">Increases the formation of ribosomal termination complexes and stimulates activities of RF-1 and RF-2. It binds guanine nucleotides and has strong preference for UGA stop codons. It may interact directly with the ribosome. The stimulation of RF-1 and RF-2 is significantly reduced by GTP and GDP, but not by GMP.</text>
</comment>
<comment type="subcellular location">
    <subcellularLocation>
        <location evidence="1">Cytoplasm</location>
    </subcellularLocation>
</comment>
<comment type="similarity">
    <text evidence="1">Belongs to the TRAFAC class translation factor GTPase superfamily. Classic translation factor GTPase family. PrfC subfamily.</text>
</comment>
<proteinExistence type="inferred from homology"/>
<reference key="1">
    <citation type="submission" date="2006-09" db="EMBL/GenBank/DDBJ databases">
        <title>Complete sequence of chromosome 1 of Shewanella sp. ANA-3.</title>
        <authorList>
            <person name="Copeland A."/>
            <person name="Lucas S."/>
            <person name="Lapidus A."/>
            <person name="Barry K."/>
            <person name="Detter J.C."/>
            <person name="Glavina del Rio T."/>
            <person name="Hammon N."/>
            <person name="Israni S."/>
            <person name="Dalin E."/>
            <person name="Tice H."/>
            <person name="Pitluck S."/>
            <person name="Chertkov O."/>
            <person name="Brettin T."/>
            <person name="Bruce D."/>
            <person name="Han C."/>
            <person name="Tapia R."/>
            <person name="Gilna P."/>
            <person name="Schmutz J."/>
            <person name="Larimer F."/>
            <person name="Land M."/>
            <person name="Hauser L."/>
            <person name="Kyrpides N."/>
            <person name="Kim E."/>
            <person name="Newman D."/>
            <person name="Salticov C."/>
            <person name="Konstantinidis K."/>
            <person name="Klappenback J."/>
            <person name="Tiedje J."/>
            <person name="Richardson P."/>
        </authorList>
    </citation>
    <scope>NUCLEOTIDE SEQUENCE [LARGE SCALE GENOMIC DNA]</scope>
    <source>
        <strain>ANA-3</strain>
    </source>
</reference>
<dbReference type="EMBL" id="CP000469">
    <property type="protein sequence ID" value="ABK47272.1"/>
    <property type="molecule type" value="Genomic_DNA"/>
</dbReference>
<dbReference type="RefSeq" id="WP_011716148.1">
    <property type="nucleotide sequence ID" value="NC_008577.1"/>
</dbReference>
<dbReference type="SMR" id="A0KU03"/>
<dbReference type="STRING" id="94122.Shewana3_1037"/>
<dbReference type="GeneID" id="94727028"/>
<dbReference type="KEGG" id="shn:Shewana3_1037"/>
<dbReference type="eggNOG" id="COG4108">
    <property type="taxonomic scope" value="Bacteria"/>
</dbReference>
<dbReference type="HOGENOM" id="CLU_002794_2_1_6"/>
<dbReference type="OrthoDB" id="9804431at2"/>
<dbReference type="Proteomes" id="UP000002589">
    <property type="component" value="Chromosome"/>
</dbReference>
<dbReference type="GO" id="GO:0005829">
    <property type="term" value="C:cytosol"/>
    <property type="evidence" value="ECO:0007669"/>
    <property type="project" value="TreeGrafter"/>
</dbReference>
<dbReference type="GO" id="GO:0005525">
    <property type="term" value="F:GTP binding"/>
    <property type="evidence" value="ECO:0007669"/>
    <property type="project" value="UniProtKB-UniRule"/>
</dbReference>
<dbReference type="GO" id="GO:0003924">
    <property type="term" value="F:GTPase activity"/>
    <property type="evidence" value="ECO:0007669"/>
    <property type="project" value="InterPro"/>
</dbReference>
<dbReference type="GO" id="GO:0097216">
    <property type="term" value="F:guanosine tetraphosphate binding"/>
    <property type="evidence" value="ECO:0007669"/>
    <property type="project" value="UniProtKB-ARBA"/>
</dbReference>
<dbReference type="GO" id="GO:0016150">
    <property type="term" value="F:translation release factor activity, codon nonspecific"/>
    <property type="evidence" value="ECO:0007669"/>
    <property type="project" value="TreeGrafter"/>
</dbReference>
<dbReference type="GO" id="GO:0016149">
    <property type="term" value="F:translation release factor activity, codon specific"/>
    <property type="evidence" value="ECO:0007669"/>
    <property type="project" value="UniProtKB-UniRule"/>
</dbReference>
<dbReference type="GO" id="GO:0006449">
    <property type="term" value="P:regulation of translational termination"/>
    <property type="evidence" value="ECO:0007669"/>
    <property type="project" value="UniProtKB-UniRule"/>
</dbReference>
<dbReference type="CDD" id="cd04169">
    <property type="entry name" value="RF3"/>
    <property type="match status" value="1"/>
</dbReference>
<dbReference type="CDD" id="cd03689">
    <property type="entry name" value="RF3_II"/>
    <property type="match status" value="1"/>
</dbReference>
<dbReference type="CDD" id="cd16259">
    <property type="entry name" value="RF3_III"/>
    <property type="match status" value="1"/>
</dbReference>
<dbReference type="FunFam" id="2.40.30.10:FF:000040">
    <property type="entry name" value="Peptide chain release factor 3"/>
    <property type="match status" value="1"/>
</dbReference>
<dbReference type="FunFam" id="3.30.70.3280:FF:000001">
    <property type="entry name" value="Peptide chain release factor 3"/>
    <property type="match status" value="1"/>
</dbReference>
<dbReference type="FunFam" id="3.40.50.300:FF:000542">
    <property type="entry name" value="Peptide chain release factor 3"/>
    <property type="match status" value="1"/>
</dbReference>
<dbReference type="Gene3D" id="3.40.50.300">
    <property type="entry name" value="P-loop containing nucleotide triphosphate hydrolases"/>
    <property type="match status" value="2"/>
</dbReference>
<dbReference type="Gene3D" id="3.30.70.3280">
    <property type="entry name" value="Peptide chain release factor 3, domain III"/>
    <property type="match status" value="1"/>
</dbReference>
<dbReference type="HAMAP" id="MF_00072">
    <property type="entry name" value="Rel_fac_3"/>
    <property type="match status" value="1"/>
</dbReference>
<dbReference type="InterPro" id="IPR053905">
    <property type="entry name" value="EF-G-like_DII"/>
</dbReference>
<dbReference type="InterPro" id="IPR035647">
    <property type="entry name" value="EFG_III/V"/>
</dbReference>
<dbReference type="InterPro" id="IPR031157">
    <property type="entry name" value="G_TR_CS"/>
</dbReference>
<dbReference type="InterPro" id="IPR027417">
    <property type="entry name" value="P-loop_NTPase"/>
</dbReference>
<dbReference type="InterPro" id="IPR004548">
    <property type="entry name" value="PrfC"/>
</dbReference>
<dbReference type="InterPro" id="IPR032090">
    <property type="entry name" value="RF3_C"/>
</dbReference>
<dbReference type="InterPro" id="IPR038467">
    <property type="entry name" value="RF3_dom_3_sf"/>
</dbReference>
<dbReference type="InterPro" id="IPR041732">
    <property type="entry name" value="RF3_GTP-bd"/>
</dbReference>
<dbReference type="InterPro" id="IPR005225">
    <property type="entry name" value="Small_GTP-bd"/>
</dbReference>
<dbReference type="InterPro" id="IPR000795">
    <property type="entry name" value="T_Tr_GTP-bd_dom"/>
</dbReference>
<dbReference type="InterPro" id="IPR009000">
    <property type="entry name" value="Transl_B-barrel_sf"/>
</dbReference>
<dbReference type="NCBIfam" id="TIGR00503">
    <property type="entry name" value="prfC"/>
    <property type="match status" value="1"/>
</dbReference>
<dbReference type="NCBIfam" id="NF001964">
    <property type="entry name" value="PRK00741.1"/>
    <property type="match status" value="1"/>
</dbReference>
<dbReference type="NCBIfam" id="TIGR00231">
    <property type="entry name" value="small_GTP"/>
    <property type="match status" value="1"/>
</dbReference>
<dbReference type="PANTHER" id="PTHR43556">
    <property type="entry name" value="PEPTIDE CHAIN RELEASE FACTOR RF3"/>
    <property type="match status" value="1"/>
</dbReference>
<dbReference type="PANTHER" id="PTHR43556:SF2">
    <property type="entry name" value="PEPTIDE CHAIN RELEASE FACTOR RF3"/>
    <property type="match status" value="1"/>
</dbReference>
<dbReference type="Pfam" id="PF22042">
    <property type="entry name" value="EF-G_D2"/>
    <property type="match status" value="1"/>
</dbReference>
<dbReference type="Pfam" id="PF00009">
    <property type="entry name" value="GTP_EFTU"/>
    <property type="match status" value="1"/>
</dbReference>
<dbReference type="Pfam" id="PF16658">
    <property type="entry name" value="RF3_C"/>
    <property type="match status" value="1"/>
</dbReference>
<dbReference type="PRINTS" id="PR00315">
    <property type="entry name" value="ELONGATNFCT"/>
</dbReference>
<dbReference type="SUPFAM" id="SSF54980">
    <property type="entry name" value="EF-G C-terminal domain-like"/>
    <property type="match status" value="1"/>
</dbReference>
<dbReference type="SUPFAM" id="SSF52540">
    <property type="entry name" value="P-loop containing nucleoside triphosphate hydrolases"/>
    <property type="match status" value="1"/>
</dbReference>
<dbReference type="SUPFAM" id="SSF50447">
    <property type="entry name" value="Translation proteins"/>
    <property type="match status" value="1"/>
</dbReference>
<dbReference type="PROSITE" id="PS00301">
    <property type="entry name" value="G_TR_1"/>
    <property type="match status" value="1"/>
</dbReference>
<dbReference type="PROSITE" id="PS51722">
    <property type="entry name" value="G_TR_2"/>
    <property type="match status" value="1"/>
</dbReference>
<evidence type="ECO:0000255" key="1">
    <source>
        <dbReference type="HAMAP-Rule" id="MF_00072"/>
    </source>
</evidence>
<keyword id="KW-0963">Cytoplasm</keyword>
<keyword id="KW-0342">GTP-binding</keyword>
<keyword id="KW-0547">Nucleotide-binding</keyword>
<keyword id="KW-0648">Protein biosynthesis</keyword>
<gene>
    <name evidence="1" type="primary">prfC</name>
    <name type="ordered locus">Shewana3_1037</name>
</gene>
<accession>A0KU03</accession>
<protein>
    <recommendedName>
        <fullName evidence="1">Peptide chain release factor 3</fullName>
        <shortName evidence="1">RF-3</shortName>
    </recommendedName>
</protein>
<name>RF3_SHESA</name>
<feature type="chain" id="PRO_1000023678" description="Peptide chain release factor 3">
    <location>
        <begin position="1"/>
        <end position="526"/>
    </location>
</feature>
<feature type="domain" description="tr-type G">
    <location>
        <begin position="9"/>
        <end position="277"/>
    </location>
</feature>
<feature type="binding site" evidence="1">
    <location>
        <begin position="18"/>
        <end position="25"/>
    </location>
    <ligand>
        <name>GTP</name>
        <dbReference type="ChEBI" id="CHEBI:37565"/>
    </ligand>
</feature>
<feature type="binding site" evidence="1">
    <location>
        <begin position="86"/>
        <end position="90"/>
    </location>
    <ligand>
        <name>GTP</name>
        <dbReference type="ChEBI" id="CHEBI:37565"/>
    </ligand>
</feature>
<feature type="binding site" evidence="1">
    <location>
        <begin position="140"/>
        <end position="143"/>
    </location>
    <ligand>
        <name>GTP</name>
        <dbReference type="ChEBI" id="CHEBI:37565"/>
    </ligand>
</feature>
<organism>
    <name type="scientific">Shewanella sp. (strain ANA-3)</name>
    <dbReference type="NCBI Taxonomy" id="94122"/>
    <lineage>
        <taxon>Bacteria</taxon>
        <taxon>Pseudomonadati</taxon>
        <taxon>Pseudomonadota</taxon>
        <taxon>Gammaproteobacteria</taxon>
        <taxon>Alteromonadales</taxon>
        <taxon>Shewanellaceae</taxon>
        <taxon>Shewanella</taxon>
    </lineage>
</organism>